<accession>P56451</accession>
<protein>
    <recommendedName>
        <fullName>Melanocortin receptor 5</fullName>
        <shortName>MC5-R</shortName>
    </recommendedName>
</protein>
<reference key="1">
    <citation type="submission" date="1997-10" db="EMBL/GenBank/DDBJ databases">
        <authorList>
            <person name="Oulmouden A."/>
            <person name="Petit J.-M."/>
            <person name="Julien R."/>
        </authorList>
    </citation>
    <scope>NUCLEOTIDE SEQUENCE [GENOMIC DNA]</scope>
</reference>
<sequence length="325" mass="36526">MNSSFHLHFLDLGLNTTDGNLSGLSVQNASSLCEDMGIAVEVFLALGLISLLENILVIGAIVRNRNLHTPMYFFVGSLAVADMLVSLSNSWETITIYLLTNKHLVMADASVRHLDNVFDSMICISVVASMCSLLAIAVDRYVTIFCALRYQRIMTGRRSGAIIGGIWAFCASCGTVFIVYYESTYVVICLIAMFLTMLLLMASLYTHMFLLARTHIRRIATLPGHSSVRQRTGVKGAITLAMLLGVFIVCWAPFFLHLILMISCPHNLYCSCFMSHFNMYLILIMCNSVIDPLIYAFRSQEMRKTFKEIVCFQSFRTPCRFPSRY</sequence>
<evidence type="ECO:0000250" key="1"/>
<evidence type="ECO:0000255" key="2"/>
<evidence type="ECO:0000255" key="3">
    <source>
        <dbReference type="PROSITE-ProRule" id="PRU00521"/>
    </source>
</evidence>
<dbReference type="EMBL" id="AJ002024">
    <property type="protein sequence ID" value="CAA05147.1"/>
    <property type="molecule type" value="Genomic_DNA"/>
</dbReference>
<dbReference type="RefSeq" id="NP_001015542.1">
    <property type="nucleotide sequence ID" value="NM_001015542.1"/>
</dbReference>
<dbReference type="SMR" id="P56451"/>
<dbReference type="FunCoup" id="P56451">
    <property type="interactions" value="182"/>
</dbReference>
<dbReference type="STRING" id="9913.ENSBTAP00000012049"/>
<dbReference type="GlyCosmos" id="P56451">
    <property type="glycosylation" value="4 sites, No reported glycans"/>
</dbReference>
<dbReference type="GlyGen" id="P56451">
    <property type="glycosylation" value="4 sites"/>
</dbReference>
<dbReference type="PaxDb" id="9913-ENSBTAP00000012049"/>
<dbReference type="Ensembl" id="ENSBTAT00000012049.3">
    <property type="protein sequence ID" value="ENSBTAP00000012049.1"/>
    <property type="gene ID" value="ENSBTAG00000009143.3"/>
</dbReference>
<dbReference type="Ensembl" id="ENSBTAT00000088452.1">
    <property type="protein sequence ID" value="ENSBTAP00000075107.1"/>
    <property type="gene ID" value="ENSBTAG00000009143.3"/>
</dbReference>
<dbReference type="GeneID" id="507987"/>
<dbReference type="KEGG" id="bta:507987"/>
<dbReference type="CTD" id="4161"/>
<dbReference type="VEuPathDB" id="HostDB:ENSBTAG00000009143"/>
<dbReference type="VGNC" id="VGNC:31296">
    <property type="gene designation" value="MC5R"/>
</dbReference>
<dbReference type="eggNOG" id="KOG3656">
    <property type="taxonomic scope" value="Eukaryota"/>
</dbReference>
<dbReference type="GeneTree" id="ENSGT01120000271819"/>
<dbReference type="HOGENOM" id="CLU_009579_13_0_1"/>
<dbReference type="InParanoid" id="P56451"/>
<dbReference type="OMA" id="WIFCTGC"/>
<dbReference type="OrthoDB" id="5970330at2759"/>
<dbReference type="TreeFam" id="TF332646"/>
<dbReference type="Reactome" id="R-BTA-375276">
    <property type="pathway name" value="Peptide ligand-binding receptors"/>
</dbReference>
<dbReference type="Reactome" id="R-BTA-418555">
    <property type="pathway name" value="G alpha (s) signalling events"/>
</dbReference>
<dbReference type="Proteomes" id="UP000009136">
    <property type="component" value="Chromosome 24"/>
</dbReference>
<dbReference type="Bgee" id="ENSBTAG00000009143">
    <property type="expression patterns" value="Expressed in zone of skin and 5 other cell types or tissues"/>
</dbReference>
<dbReference type="GO" id="GO:0005737">
    <property type="term" value="C:cytoplasm"/>
    <property type="evidence" value="ECO:0000318"/>
    <property type="project" value="GO_Central"/>
</dbReference>
<dbReference type="GO" id="GO:0005886">
    <property type="term" value="C:plasma membrane"/>
    <property type="evidence" value="ECO:0000318"/>
    <property type="project" value="GO_Central"/>
</dbReference>
<dbReference type="GO" id="GO:0004977">
    <property type="term" value="F:melanocortin receptor activity"/>
    <property type="evidence" value="ECO:0000318"/>
    <property type="project" value="GO_Central"/>
</dbReference>
<dbReference type="GO" id="GO:0007189">
    <property type="term" value="P:adenylate cyclase-activating G protein-coupled receptor signaling pathway"/>
    <property type="evidence" value="ECO:0000318"/>
    <property type="project" value="GO_Central"/>
</dbReference>
<dbReference type="GO" id="GO:0019222">
    <property type="term" value="P:regulation of metabolic process"/>
    <property type="evidence" value="ECO:0000318"/>
    <property type="project" value="GO_Central"/>
</dbReference>
<dbReference type="FunFam" id="1.20.1070.10:FF:000077">
    <property type="entry name" value="Melanocortin receptor 4"/>
    <property type="match status" value="1"/>
</dbReference>
<dbReference type="Gene3D" id="1.20.1070.10">
    <property type="entry name" value="Rhodopsin 7-helix transmembrane proteins"/>
    <property type="match status" value="1"/>
</dbReference>
<dbReference type="InterPro" id="IPR000276">
    <property type="entry name" value="GPCR_Rhodpsn"/>
</dbReference>
<dbReference type="InterPro" id="IPR017452">
    <property type="entry name" value="GPCR_Rhodpsn_7TM"/>
</dbReference>
<dbReference type="InterPro" id="IPR001908">
    <property type="entry name" value="MC3-5R"/>
</dbReference>
<dbReference type="InterPro" id="IPR000621">
    <property type="entry name" value="Melancort_rcpt_5"/>
</dbReference>
<dbReference type="InterPro" id="IPR001671">
    <property type="entry name" value="Melcrt_ACTH_rcpt"/>
</dbReference>
<dbReference type="PANTHER" id="PTHR22750">
    <property type="entry name" value="G-PROTEIN COUPLED RECEPTOR"/>
    <property type="match status" value="1"/>
</dbReference>
<dbReference type="Pfam" id="PF00001">
    <property type="entry name" value="7tm_1"/>
    <property type="match status" value="1"/>
</dbReference>
<dbReference type="PRINTS" id="PR00237">
    <property type="entry name" value="GPCRRHODOPSN"/>
</dbReference>
<dbReference type="PRINTS" id="PR00534">
    <property type="entry name" value="MCRFAMILY"/>
</dbReference>
<dbReference type="PRINTS" id="PR00535">
    <property type="entry name" value="MELNOCORTINR"/>
</dbReference>
<dbReference type="PRINTS" id="PR01063">
    <property type="entry name" value="MELNOCORTN5R"/>
</dbReference>
<dbReference type="SMART" id="SM01381">
    <property type="entry name" value="7TM_GPCR_Srsx"/>
    <property type="match status" value="1"/>
</dbReference>
<dbReference type="SUPFAM" id="SSF81321">
    <property type="entry name" value="Family A G protein-coupled receptor-like"/>
    <property type="match status" value="1"/>
</dbReference>
<dbReference type="PROSITE" id="PS00237">
    <property type="entry name" value="G_PROTEIN_RECEP_F1_1"/>
    <property type="match status" value="1"/>
</dbReference>
<dbReference type="PROSITE" id="PS50262">
    <property type="entry name" value="G_PROTEIN_RECEP_F1_2"/>
    <property type="match status" value="1"/>
</dbReference>
<feature type="chain" id="PRO_0000069727" description="Melanocortin receptor 5">
    <location>
        <begin position="1"/>
        <end position="325"/>
    </location>
</feature>
<feature type="topological domain" description="Extracellular" evidence="2">
    <location>
        <begin position="1"/>
        <end position="37"/>
    </location>
</feature>
<feature type="transmembrane region" description="Helical; Name=1" evidence="2">
    <location>
        <begin position="38"/>
        <end position="61"/>
    </location>
</feature>
<feature type="topological domain" description="Cytoplasmic" evidence="2">
    <location>
        <begin position="62"/>
        <end position="73"/>
    </location>
</feature>
<feature type="transmembrane region" description="Helical; Name=2" evidence="2">
    <location>
        <begin position="74"/>
        <end position="97"/>
    </location>
</feature>
<feature type="topological domain" description="Extracellular" evidence="2">
    <location>
        <begin position="98"/>
        <end position="114"/>
    </location>
</feature>
<feature type="transmembrane region" description="Helical; Name=3" evidence="2">
    <location>
        <begin position="115"/>
        <end position="138"/>
    </location>
</feature>
<feature type="topological domain" description="Cytoplasmic" evidence="2">
    <location>
        <begin position="139"/>
        <end position="155"/>
    </location>
</feature>
<feature type="transmembrane region" description="Helical; Name=4" evidence="2">
    <location>
        <begin position="156"/>
        <end position="179"/>
    </location>
</feature>
<feature type="topological domain" description="Extracellular" evidence="2">
    <location>
        <begin position="180"/>
        <end position="186"/>
    </location>
</feature>
<feature type="transmembrane region" description="Helical; Name=5" evidence="2">
    <location>
        <begin position="187"/>
        <end position="211"/>
    </location>
</feature>
<feature type="topological domain" description="Cytoplasmic" evidence="2">
    <location>
        <begin position="212"/>
        <end position="239"/>
    </location>
</feature>
<feature type="transmembrane region" description="Helical; Name=6" evidence="2">
    <location>
        <begin position="240"/>
        <end position="265"/>
    </location>
</feature>
<feature type="topological domain" description="Extracellular" evidence="2">
    <location>
        <begin position="266"/>
        <end position="273"/>
    </location>
</feature>
<feature type="transmembrane region" description="Helical; Name=7" evidence="2">
    <location>
        <begin position="274"/>
        <end position="297"/>
    </location>
</feature>
<feature type="topological domain" description="Cytoplasmic" evidence="2">
    <location>
        <begin position="298"/>
        <end position="325"/>
    </location>
</feature>
<feature type="lipid moiety-binding region" description="S-palmitoyl cysteine" evidence="2">
    <location>
        <position position="311"/>
    </location>
</feature>
<feature type="glycosylation site" description="N-linked (GlcNAc...) asparagine" evidence="2">
    <location>
        <position position="2"/>
    </location>
</feature>
<feature type="glycosylation site" description="N-linked (GlcNAc...) asparagine" evidence="2">
    <location>
        <position position="15"/>
    </location>
</feature>
<feature type="glycosylation site" description="N-linked (GlcNAc...) asparagine" evidence="2">
    <location>
        <position position="20"/>
    </location>
</feature>
<feature type="glycosylation site" description="N-linked (GlcNAc...) asparagine" evidence="2">
    <location>
        <position position="28"/>
    </location>
</feature>
<keyword id="KW-1003">Cell membrane</keyword>
<keyword id="KW-0297">G-protein coupled receptor</keyword>
<keyword id="KW-0325">Glycoprotein</keyword>
<keyword id="KW-0449">Lipoprotein</keyword>
<keyword id="KW-0472">Membrane</keyword>
<keyword id="KW-0564">Palmitate</keyword>
<keyword id="KW-0675">Receptor</keyword>
<keyword id="KW-1185">Reference proteome</keyword>
<keyword id="KW-0807">Transducer</keyword>
<keyword id="KW-0812">Transmembrane</keyword>
<keyword id="KW-1133">Transmembrane helix</keyword>
<gene>
    <name type="primary">MC5R</name>
</gene>
<name>MC5R_BOVIN</name>
<comment type="function">
    <text evidence="1">Receptor for MSH (alpha, beta and gamma) and ACTH. The activity of this receptor is mediated by G proteins which activate adenylate cyclase. This receptor is a possible mediator of the immunomodulation properties of melanocortins (By similarity).</text>
</comment>
<comment type="subcellular location">
    <subcellularLocation>
        <location>Cell membrane</location>
        <topology>Multi-pass membrane protein</topology>
    </subcellularLocation>
</comment>
<comment type="similarity">
    <text evidence="3">Belongs to the G-protein coupled receptor 1 family.</text>
</comment>
<proteinExistence type="inferred from homology"/>
<organism>
    <name type="scientific">Bos taurus</name>
    <name type="common">Bovine</name>
    <dbReference type="NCBI Taxonomy" id="9913"/>
    <lineage>
        <taxon>Eukaryota</taxon>
        <taxon>Metazoa</taxon>
        <taxon>Chordata</taxon>
        <taxon>Craniata</taxon>
        <taxon>Vertebrata</taxon>
        <taxon>Euteleostomi</taxon>
        <taxon>Mammalia</taxon>
        <taxon>Eutheria</taxon>
        <taxon>Laurasiatheria</taxon>
        <taxon>Artiodactyla</taxon>
        <taxon>Ruminantia</taxon>
        <taxon>Pecora</taxon>
        <taxon>Bovidae</taxon>
        <taxon>Bovinae</taxon>
        <taxon>Bos</taxon>
    </lineage>
</organism>